<organism>
    <name type="scientific">Xanthomonas euvesicatoria pv. vesicatoria (strain 85-10)</name>
    <name type="common">Xanthomonas campestris pv. vesicatoria</name>
    <dbReference type="NCBI Taxonomy" id="316273"/>
    <lineage>
        <taxon>Bacteria</taxon>
        <taxon>Pseudomonadati</taxon>
        <taxon>Pseudomonadota</taxon>
        <taxon>Gammaproteobacteria</taxon>
        <taxon>Lysobacterales</taxon>
        <taxon>Lysobacteraceae</taxon>
        <taxon>Xanthomonas</taxon>
    </lineage>
</organism>
<reference key="1">
    <citation type="journal article" date="2005" name="J. Bacteriol.">
        <title>Insights into genome plasticity and pathogenicity of the plant pathogenic Bacterium Xanthomonas campestris pv. vesicatoria revealed by the complete genome sequence.</title>
        <authorList>
            <person name="Thieme F."/>
            <person name="Koebnik R."/>
            <person name="Bekel T."/>
            <person name="Berger C."/>
            <person name="Boch J."/>
            <person name="Buettner D."/>
            <person name="Caldana C."/>
            <person name="Gaigalat L."/>
            <person name="Goesmann A."/>
            <person name="Kay S."/>
            <person name="Kirchner O."/>
            <person name="Lanz C."/>
            <person name="Linke B."/>
            <person name="McHardy A.C."/>
            <person name="Meyer F."/>
            <person name="Mittenhuber G."/>
            <person name="Nies D.H."/>
            <person name="Niesbach-Kloesgen U."/>
            <person name="Patschkowski T."/>
            <person name="Rueckert C."/>
            <person name="Rupp O."/>
            <person name="Schneiker S."/>
            <person name="Schuster S.C."/>
            <person name="Vorhoelter F.J."/>
            <person name="Weber E."/>
            <person name="Puehler A."/>
            <person name="Bonas U."/>
            <person name="Bartels D."/>
            <person name="Kaiser O."/>
        </authorList>
    </citation>
    <scope>NUCLEOTIDE SEQUENCE [LARGE SCALE GENOMIC DNA]</scope>
    <source>
        <strain>85-10</strain>
    </source>
</reference>
<name>RL31B_XANE5</name>
<feature type="chain" id="PRO_1000014723" description="Large ribosomal subunit protein bL31B">
    <location>
        <begin position="1"/>
        <end position="80"/>
    </location>
</feature>
<accession>Q3BPS6</accession>
<keyword id="KW-0687">Ribonucleoprotein</keyword>
<keyword id="KW-0689">Ribosomal protein</keyword>
<evidence type="ECO:0000255" key="1">
    <source>
        <dbReference type="HAMAP-Rule" id="MF_00502"/>
    </source>
</evidence>
<evidence type="ECO:0000305" key="2"/>
<gene>
    <name evidence="1" type="primary">rpmE2</name>
    <name type="ordered locus">XCV3506</name>
</gene>
<sequence length="80" mass="9364">MKDNVHPNYKDVVFHDVTSDFKILTRSTMTSKETVKWEDGQEYPLIKVEISSSSHPFYTGKHKVIDTGGRIDKFQKRYAR</sequence>
<comment type="subunit">
    <text evidence="1">Part of the 50S ribosomal subunit.</text>
</comment>
<comment type="similarity">
    <text evidence="1">Belongs to the bacterial ribosomal protein bL31 family. Type B subfamily.</text>
</comment>
<proteinExistence type="inferred from homology"/>
<dbReference type="EMBL" id="AM039952">
    <property type="protein sequence ID" value="CAJ25237.1"/>
    <property type="molecule type" value="Genomic_DNA"/>
</dbReference>
<dbReference type="RefSeq" id="WP_005911911.1">
    <property type="nucleotide sequence ID" value="NZ_CP017190.1"/>
</dbReference>
<dbReference type="SMR" id="Q3BPS6"/>
<dbReference type="STRING" id="456327.BJD11_05210"/>
<dbReference type="KEGG" id="xcv:XCV3506"/>
<dbReference type="eggNOG" id="COG0254">
    <property type="taxonomic scope" value="Bacteria"/>
</dbReference>
<dbReference type="HOGENOM" id="CLU_114306_2_2_6"/>
<dbReference type="Proteomes" id="UP000007069">
    <property type="component" value="Chromosome"/>
</dbReference>
<dbReference type="GO" id="GO:1990904">
    <property type="term" value="C:ribonucleoprotein complex"/>
    <property type="evidence" value="ECO:0007669"/>
    <property type="project" value="UniProtKB-KW"/>
</dbReference>
<dbReference type="GO" id="GO:0005840">
    <property type="term" value="C:ribosome"/>
    <property type="evidence" value="ECO:0007669"/>
    <property type="project" value="UniProtKB-KW"/>
</dbReference>
<dbReference type="GO" id="GO:0003735">
    <property type="term" value="F:structural constituent of ribosome"/>
    <property type="evidence" value="ECO:0007669"/>
    <property type="project" value="InterPro"/>
</dbReference>
<dbReference type="GO" id="GO:0006412">
    <property type="term" value="P:translation"/>
    <property type="evidence" value="ECO:0007669"/>
    <property type="project" value="UniProtKB-UniRule"/>
</dbReference>
<dbReference type="Gene3D" id="4.10.830.30">
    <property type="entry name" value="Ribosomal protein L31"/>
    <property type="match status" value="1"/>
</dbReference>
<dbReference type="HAMAP" id="MF_00502">
    <property type="entry name" value="Ribosomal_bL31_2"/>
    <property type="match status" value="1"/>
</dbReference>
<dbReference type="InterPro" id="IPR034704">
    <property type="entry name" value="Ribosomal_bL28/bL31-like_sf"/>
</dbReference>
<dbReference type="InterPro" id="IPR002150">
    <property type="entry name" value="Ribosomal_bL31"/>
</dbReference>
<dbReference type="InterPro" id="IPR027493">
    <property type="entry name" value="Ribosomal_bL31_B"/>
</dbReference>
<dbReference type="InterPro" id="IPR042105">
    <property type="entry name" value="Ribosomal_bL31_sf"/>
</dbReference>
<dbReference type="NCBIfam" id="TIGR00105">
    <property type="entry name" value="L31"/>
    <property type="match status" value="1"/>
</dbReference>
<dbReference type="NCBIfam" id="NF002462">
    <property type="entry name" value="PRK01678.1"/>
    <property type="match status" value="1"/>
</dbReference>
<dbReference type="PANTHER" id="PTHR33280">
    <property type="entry name" value="50S RIBOSOMAL PROTEIN L31, CHLOROPLASTIC"/>
    <property type="match status" value="1"/>
</dbReference>
<dbReference type="PANTHER" id="PTHR33280:SF6">
    <property type="entry name" value="LARGE RIBOSOMAL SUBUNIT PROTEIN BL31A"/>
    <property type="match status" value="1"/>
</dbReference>
<dbReference type="Pfam" id="PF01197">
    <property type="entry name" value="Ribosomal_L31"/>
    <property type="match status" value="1"/>
</dbReference>
<dbReference type="PRINTS" id="PR01249">
    <property type="entry name" value="RIBOSOMALL31"/>
</dbReference>
<dbReference type="SUPFAM" id="SSF143800">
    <property type="entry name" value="L28p-like"/>
    <property type="match status" value="1"/>
</dbReference>
<dbReference type="PROSITE" id="PS01143">
    <property type="entry name" value="RIBOSOMAL_L31"/>
    <property type="match status" value="1"/>
</dbReference>
<protein>
    <recommendedName>
        <fullName evidence="1">Large ribosomal subunit protein bL31B</fullName>
    </recommendedName>
    <alternativeName>
        <fullName evidence="2">50S ribosomal protein L31 type B</fullName>
    </alternativeName>
</protein>